<protein>
    <recommendedName>
        <fullName evidence="1">Acetate kinase</fullName>
        <ecNumber evidence="1">2.7.2.1</ecNumber>
    </recommendedName>
    <alternativeName>
        <fullName evidence="1">Acetokinase</fullName>
    </alternativeName>
</protein>
<name>ACKA_HELPS</name>
<evidence type="ECO:0000255" key="1">
    <source>
        <dbReference type="HAMAP-Rule" id="MF_00020"/>
    </source>
</evidence>
<gene>
    <name evidence="1" type="primary">ackA</name>
    <name type="ordered locus">HPSH_04760</name>
</gene>
<feature type="chain" id="PRO_1000089979" description="Acetate kinase">
    <location>
        <begin position="1"/>
        <end position="401"/>
    </location>
</feature>
<feature type="active site" description="Proton donor/acceptor" evidence="1">
    <location>
        <position position="149"/>
    </location>
</feature>
<feature type="binding site" evidence="1">
    <location>
        <position position="7"/>
    </location>
    <ligand>
        <name>Mg(2+)</name>
        <dbReference type="ChEBI" id="CHEBI:18420"/>
    </ligand>
</feature>
<feature type="binding site" evidence="1">
    <location>
        <position position="14"/>
    </location>
    <ligand>
        <name>ATP</name>
        <dbReference type="ChEBI" id="CHEBI:30616"/>
    </ligand>
</feature>
<feature type="binding site" evidence="1">
    <location>
        <position position="92"/>
    </location>
    <ligand>
        <name>substrate</name>
    </ligand>
</feature>
<feature type="binding site" evidence="1">
    <location>
        <begin position="209"/>
        <end position="213"/>
    </location>
    <ligand>
        <name>ATP</name>
        <dbReference type="ChEBI" id="CHEBI:30616"/>
    </ligand>
</feature>
<feature type="binding site" evidence="1">
    <location>
        <begin position="283"/>
        <end position="285"/>
    </location>
    <ligand>
        <name>ATP</name>
        <dbReference type="ChEBI" id="CHEBI:30616"/>
    </ligand>
</feature>
<feature type="binding site" evidence="1">
    <location>
        <begin position="331"/>
        <end position="335"/>
    </location>
    <ligand>
        <name>ATP</name>
        <dbReference type="ChEBI" id="CHEBI:30616"/>
    </ligand>
</feature>
<feature type="binding site" evidence="1">
    <location>
        <position position="385"/>
    </location>
    <ligand>
        <name>Mg(2+)</name>
        <dbReference type="ChEBI" id="CHEBI:18420"/>
    </ligand>
</feature>
<feature type="site" description="Transition state stabilizer" evidence="1">
    <location>
        <position position="181"/>
    </location>
</feature>
<feature type="site" description="Transition state stabilizer" evidence="1">
    <location>
        <position position="242"/>
    </location>
</feature>
<proteinExistence type="inferred from homology"/>
<sequence length="401" mass="44316">MEILVLNLGSSSIKFKLFDMKENKPLASGLAEKIGEEIGQLKIKSHLHHNEQELKEKLVIKDHASGLLMIRENLTKMGIIKDFNQIDAIGHRVVQGGDKFHAPILVNEKVMQEIGKLSILAPLHNPANLAGIEFVQKAHPHIPQIAVFDTAFHATMPSYAYMYALPYELYEKYQIRRYGFHGTSHHYVAKEAAKFLNTAYEEFNAISLHLGNGSSAAAIQKGKSVDTSMGLTPLEGLIMGTRCGDIDPTVVEYIAQCADKSLEEVMKILNYESGLKGICGDNDARNIEARKEKGDKQAKLAFEMCAYRIKKYIGAYMAVLKKVDAIIFTAGLGENYSALRESVCEGLEDLGIALHKPTNDNPGNGLVDLSQPDAKVKVLLIPTDEELEIALQAKEIAEKLK</sequence>
<reference key="1">
    <citation type="submission" date="2008-05" db="EMBL/GenBank/DDBJ databases">
        <title>Genome sequence of Helicobacter pylori from the remote Amazon: traces of Asian ancestry of the first Americans.</title>
        <authorList>
            <person name="Kersulyte D."/>
            <person name="Kalia A."/>
            <person name="Gilman R.H."/>
            <person name="Berg D.E."/>
        </authorList>
    </citation>
    <scope>NUCLEOTIDE SEQUENCE [LARGE SCALE GENOMIC DNA]</scope>
    <source>
        <strain>Shi470</strain>
    </source>
</reference>
<accession>B2UU54</accession>
<dbReference type="EC" id="2.7.2.1" evidence="1"/>
<dbReference type="EMBL" id="CP001072">
    <property type="protein sequence ID" value="ACD48386.1"/>
    <property type="molecule type" value="Genomic_DNA"/>
</dbReference>
<dbReference type="RefSeq" id="WP_000404836.1">
    <property type="nucleotide sequence ID" value="NC_010698.2"/>
</dbReference>
<dbReference type="SMR" id="B2UU54"/>
<dbReference type="KEGG" id="hps:HPSH_04760"/>
<dbReference type="HOGENOM" id="CLU_020352_0_1_7"/>
<dbReference type="UniPathway" id="UPA00340">
    <property type="reaction ID" value="UER00458"/>
</dbReference>
<dbReference type="GO" id="GO:0005737">
    <property type="term" value="C:cytoplasm"/>
    <property type="evidence" value="ECO:0007669"/>
    <property type="project" value="UniProtKB-SubCell"/>
</dbReference>
<dbReference type="GO" id="GO:0008776">
    <property type="term" value="F:acetate kinase activity"/>
    <property type="evidence" value="ECO:0007669"/>
    <property type="project" value="UniProtKB-UniRule"/>
</dbReference>
<dbReference type="GO" id="GO:0005524">
    <property type="term" value="F:ATP binding"/>
    <property type="evidence" value="ECO:0007669"/>
    <property type="project" value="UniProtKB-KW"/>
</dbReference>
<dbReference type="GO" id="GO:0000287">
    <property type="term" value="F:magnesium ion binding"/>
    <property type="evidence" value="ECO:0007669"/>
    <property type="project" value="UniProtKB-UniRule"/>
</dbReference>
<dbReference type="GO" id="GO:0006083">
    <property type="term" value="P:acetate metabolic process"/>
    <property type="evidence" value="ECO:0007669"/>
    <property type="project" value="TreeGrafter"/>
</dbReference>
<dbReference type="GO" id="GO:0006085">
    <property type="term" value="P:acetyl-CoA biosynthetic process"/>
    <property type="evidence" value="ECO:0007669"/>
    <property type="project" value="UniProtKB-UniRule"/>
</dbReference>
<dbReference type="CDD" id="cd24010">
    <property type="entry name" value="ASKHA_NBD_AcK_PK"/>
    <property type="match status" value="1"/>
</dbReference>
<dbReference type="Gene3D" id="3.30.420.40">
    <property type="match status" value="2"/>
</dbReference>
<dbReference type="HAMAP" id="MF_00020">
    <property type="entry name" value="Acetate_kinase"/>
    <property type="match status" value="1"/>
</dbReference>
<dbReference type="InterPro" id="IPR004372">
    <property type="entry name" value="Ac/propionate_kinase"/>
</dbReference>
<dbReference type="InterPro" id="IPR000890">
    <property type="entry name" value="Aliphatic_acid_kin_short-chain"/>
</dbReference>
<dbReference type="InterPro" id="IPR023865">
    <property type="entry name" value="Aliphatic_acid_kinase_CS"/>
</dbReference>
<dbReference type="InterPro" id="IPR043129">
    <property type="entry name" value="ATPase_NBD"/>
</dbReference>
<dbReference type="NCBIfam" id="TIGR00016">
    <property type="entry name" value="ackA"/>
    <property type="match status" value="1"/>
</dbReference>
<dbReference type="PANTHER" id="PTHR21060">
    <property type="entry name" value="ACETATE KINASE"/>
    <property type="match status" value="1"/>
</dbReference>
<dbReference type="PANTHER" id="PTHR21060:SF15">
    <property type="entry name" value="ACETATE KINASE-RELATED"/>
    <property type="match status" value="1"/>
</dbReference>
<dbReference type="Pfam" id="PF00871">
    <property type="entry name" value="Acetate_kinase"/>
    <property type="match status" value="1"/>
</dbReference>
<dbReference type="PIRSF" id="PIRSF000722">
    <property type="entry name" value="Acetate_prop_kin"/>
    <property type="match status" value="1"/>
</dbReference>
<dbReference type="PRINTS" id="PR00471">
    <property type="entry name" value="ACETATEKNASE"/>
</dbReference>
<dbReference type="SUPFAM" id="SSF53067">
    <property type="entry name" value="Actin-like ATPase domain"/>
    <property type="match status" value="2"/>
</dbReference>
<dbReference type="PROSITE" id="PS01075">
    <property type="entry name" value="ACETATE_KINASE_1"/>
    <property type="match status" value="1"/>
</dbReference>
<dbReference type="PROSITE" id="PS01076">
    <property type="entry name" value="ACETATE_KINASE_2"/>
    <property type="match status" value="1"/>
</dbReference>
<organism>
    <name type="scientific">Helicobacter pylori (strain Shi470)</name>
    <dbReference type="NCBI Taxonomy" id="512562"/>
    <lineage>
        <taxon>Bacteria</taxon>
        <taxon>Pseudomonadati</taxon>
        <taxon>Campylobacterota</taxon>
        <taxon>Epsilonproteobacteria</taxon>
        <taxon>Campylobacterales</taxon>
        <taxon>Helicobacteraceae</taxon>
        <taxon>Helicobacter</taxon>
    </lineage>
</organism>
<comment type="function">
    <text evidence="1">Catalyzes the formation of acetyl phosphate from acetate and ATP. Can also catalyze the reverse reaction.</text>
</comment>
<comment type="catalytic activity">
    <reaction evidence="1">
        <text>acetate + ATP = acetyl phosphate + ADP</text>
        <dbReference type="Rhea" id="RHEA:11352"/>
        <dbReference type="ChEBI" id="CHEBI:22191"/>
        <dbReference type="ChEBI" id="CHEBI:30089"/>
        <dbReference type="ChEBI" id="CHEBI:30616"/>
        <dbReference type="ChEBI" id="CHEBI:456216"/>
        <dbReference type="EC" id="2.7.2.1"/>
    </reaction>
</comment>
<comment type="cofactor">
    <cofactor evidence="1">
        <name>Mg(2+)</name>
        <dbReference type="ChEBI" id="CHEBI:18420"/>
    </cofactor>
    <cofactor evidence="1">
        <name>Mn(2+)</name>
        <dbReference type="ChEBI" id="CHEBI:29035"/>
    </cofactor>
    <text evidence="1">Mg(2+). Can also accept Mn(2+).</text>
</comment>
<comment type="pathway">
    <text evidence="1">Metabolic intermediate biosynthesis; acetyl-CoA biosynthesis; acetyl-CoA from acetate: step 1/2.</text>
</comment>
<comment type="subunit">
    <text evidence="1">Homodimer.</text>
</comment>
<comment type="subcellular location">
    <subcellularLocation>
        <location evidence="1">Cytoplasm</location>
    </subcellularLocation>
</comment>
<comment type="similarity">
    <text evidence="1">Belongs to the acetokinase family.</text>
</comment>
<keyword id="KW-0067">ATP-binding</keyword>
<keyword id="KW-0963">Cytoplasm</keyword>
<keyword id="KW-0418">Kinase</keyword>
<keyword id="KW-0460">Magnesium</keyword>
<keyword id="KW-0479">Metal-binding</keyword>
<keyword id="KW-0547">Nucleotide-binding</keyword>
<keyword id="KW-0808">Transferase</keyword>